<feature type="chain" id="PRO_0000132330" description="Small ribosomal subunit protein uS4">
    <location>
        <begin position="1"/>
        <end position="200"/>
    </location>
</feature>
<feature type="domain" description="S4 RNA-binding" evidence="1">
    <location>
        <begin position="92"/>
        <end position="152"/>
    </location>
</feature>
<feature type="region of interest" description="Disordered" evidence="2">
    <location>
        <begin position="22"/>
        <end position="42"/>
    </location>
</feature>
<reference key="1">
    <citation type="journal article" date="2003" name="Nature">
        <title>The genome sequence of Bacillus anthracis Ames and comparison to closely related bacteria.</title>
        <authorList>
            <person name="Read T.D."/>
            <person name="Peterson S.N."/>
            <person name="Tourasse N.J."/>
            <person name="Baillie L.W."/>
            <person name="Paulsen I.T."/>
            <person name="Nelson K.E."/>
            <person name="Tettelin H."/>
            <person name="Fouts D.E."/>
            <person name="Eisen J.A."/>
            <person name="Gill S.R."/>
            <person name="Holtzapple E.K."/>
            <person name="Okstad O.A."/>
            <person name="Helgason E."/>
            <person name="Rilstone J."/>
            <person name="Wu M."/>
            <person name="Kolonay J.F."/>
            <person name="Beanan M.J."/>
            <person name="Dodson R.J."/>
            <person name="Brinkac L.M."/>
            <person name="Gwinn M.L."/>
            <person name="DeBoy R.T."/>
            <person name="Madpu R."/>
            <person name="Daugherty S.C."/>
            <person name="Durkin A.S."/>
            <person name="Haft D.H."/>
            <person name="Nelson W.C."/>
            <person name="Peterson J.D."/>
            <person name="Pop M."/>
            <person name="Khouri H.M."/>
            <person name="Radune D."/>
            <person name="Benton J.L."/>
            <person name="Mahamoud Y."/>
            <person name="Jiang L."/>
            <person name="Hance I.R."/>
            <person name="Weidman J.F."/>
            <person name="Berry K.J."/>
            <person name="Plaut R.D."/>
            <person name="Wolf A.M."/>
            <person name="Watkins K.L."/>
            <person name="Nierman W.C."/>
            <person name="Hazen A."/>
            <person name="Cline R.T."/>
            <person name="Redmond C."/>
            <person name="Thwaite J.E."/>
            <person name="White O."/>
            <person name="Salzberg S.L."/>
            <person name="Thomason B."/>
            <person name="Friedlander A.M."/>
            <person name="Koehler T.M."/>
            <person name="Hanna P.C."/>
            <person name="Kolstoe A.-B."/>
            <person name="Fraser C.M."/>
        </authorList>
    </citation>
    <scope>NUCLEOTIDE SEQUENCE [LARGE SCALE GENOMIC DNA]</scope>
    <source>
        <strain>Ames / isolate Porton</strain>
    </source>
</reference>
<reference key="2">
    <citation type="journal article" date="2009" name="J. Bacteriol.">
        <title>The complete genome sequence of Bacillus anthracis Ames 'Ancestor'.</title>
        <authorList>
            <person name="Ravel J."/>
            <person name="Jiang L."/>
            <person name="Stanley S.T."/>
            <person name="Wilson M.R."/>
            <person name="Decker R.S."/>
            <person name="Read T.D."/>
            <person name="Worsham P."/>
            <person name="Keim P.S."/>
            <person name="Salzberg S.L."/>
            <person name="Fraser-Liggett C.M."/>
            <person name="Rasko D.A."/>
        </authorList>
    </citation>
    <scope>NUCLEOTIDE SEQUENCE [LARGE SCALE GENOMIC DNA]</scope>
    <source>
        <strain>Ames ancestor</strain>
    </source>
</reference>
<reference key="3">
    <citation type="submission" date="2004-01" db="EMBL/GenBank/DDBJ databases">
        <title>Complete genome sequence of Bacillus anthracis Sterne.</title>
        <authorList>
            <person name="Brettin T.S."/>
            <person name="Bruce D."/>
            <person name="Challacombe J.F."/>
            <person name="Gilna P."/>
            <person name="Han C."/>
            <person name="Hill K."/>
            <person name="Hitchcock P."/>
            <person name="Jackson P."/>
            <person name="Keim P."/>
            <person name="Longmire J."/>
            <person name="Lucas S."/>
            <person name="Okinaka R."/>
            <person name="Richardson P."/>
            <person name="Rubin E."/>
            <person name="Tice H."/>
        </authorList>
    </citation>
    <scope>NUCLEOTIDE SEQUENCE [LARGE SCALE GENOMIC DNA]</scope>
    <source>
        <strain>Sterne</strain>
    </source>
</reference>
<dbReference type="EMBL" id="AE016879">
    <property type="protein sequence ID" value="AAP28592.1"/>
    <property type="molecule type" value="Genomic_DNA"/>
</dbReference>
<dbReference type="EMBL" id="AE017334">
    <property type="protein sequence ID" value="AAT34027.1"/>
    <property type="molecule type" value="Genomic_DNA"/>
</dbReference>
<dbReference type="EMBL" id="AE017225">
    <property type="protein sequence ID" value="AAT56851.1"/>
    <property type="molecule type" value="Genomic_DNA"/>
</dbReference>
<dbReference type="RefSeq" id="NP_847106.1">
    <property type="nucleotide sequence ID" value="NC_003997.3"/>
</dbReference>
<dbReference type="RefSeq" id="WP_000135311.1">
    <property type="nucleotide sequence ID" value="NZ_WXXJ01000026.1"/>
</dbReference>
<dbReference type="RefSeq" id="YP_030801.1">
    <property type="nucleotide sequence ID" value="NC_005945.1"/>
</dbReference>
<dbReference type="SMR" id="Q81KT2"/>
<dbReference type="STRING" id="261594.GBAA_4908"/>
<dbReference type="DNASU" id="1084081"/>
<dbReference type="GeneID" id="83638371"/>
<dbReference type="KEGG" id="ban:BA_4908"/>
<dbReference type="KEGG" id="bar:GBAA_4908"/>
<dbReference type="KEGG" id="bat:BAS4554"/>
<dbReference type="PATRIC" id="fig|198094.11.peg.4869"/>
<dbReference type="eggNOG" id="COG0522">
    <property type="taxonomic scope" value="Bacteria"/>
</dbReference>
<dbReference type="HOGENOM" id="CLU_092403_0_1_9"/>
<dbReference type="OMA" id="QLVVELY"/>
<dbReference type="OrthoDB" id="9803672at2"/>
<dbReference type="Proteomes" id="UP000000427">
    <property type="component" value="Chromosome"/>
</dbReference>
<dbReference type="Proteomes" id="UP000000594">
    <property type="component" value="Chromosome"/>
</dbReference>
<dbReference type="GO" id="GO:0015935">
    <property type="term" value="C:small ribosomal subunit"/>
    <property type="evidence" value="ECO:0007669"/>
    <property type="project" value="InterPro"/>
</dbReference>
<dbReference type="GO" id="GO:0019843">
    <property type="term" value="F:rRNA binding"/>
    <property type="evidence" value="ECO:0007669"/>
    <property type="project" value="UniProtKB-UniRule"/>
</dbReference>
<dbReference type="GO" id="GO:0003735">
    <property type="term" value="F:structural constituent of ribosome"/>
    <property type="evidence" value="ECO:0007669"/>
    <property type="project" value="InterPro"/>
</dbReference>
<dbReference type="GO" id="GO:0042274">
    <property type="term" value="P:ribosomal small subunit biogenesis"/>
    <property type="evidence" value="ECO:0007669"/>
    <property type="project" value="TreeGrafter"/>
</dbReference>
<dbReference type="GO" id="GO:0006412">
    <property type="term" value="P:translation"/>
    <property type="evidence" value="ECO:0007669"/>
    <property type="project" value="UniProtKB-UniRule"/>
</dbReference>
<dbReference type="CDD" id="cd00165">
    <property type="entry name" value="S4"/>
    <property type="match status" value="1"/>
</dbReference>
<dbReference type="FunFam" id="1.10.1050.10:FF:000001">
    <property type="entry name" value="30S ribosomal protein S4"/>
    <property type="match status" value="1"/>
</dbReference>
<dbReference type="FunFam" id="3.10.290.10:FF:000001">
    <property type="entry name" value="30S ribosomal protein S4"/>
    <property type="match status" value="1"/>
</dbReference>
<dbReference type="Gene3D" id="1.10.1050.10">
    <property type="entry name" value="Ribosomal Protein S4 Delta 41, Chain A, domain 1"/>
    <property type="match status" value="1"/>
</dbReference>
<dbReference type="Gene3D" id="3.10.290.10">
    <property type="entry name" value="RNA-binding S4 domain"/>
    <property type="match status" value="1"/>
</dbReference>
<dbReference type="HAMAP" id="MF_01306_B">
    <property type="entry name" value="Ribosomal_uS4_B"/>
    <property type="match status" value="1"/>
</dbReference>
<dbReference type="InterPro" id="IPR022801">
    <property type="entry name" value="Ribosomal_uS4"/>
</dbReference>
<dbReference type="InterPro" id="IPR005709">
    <property type="entry name" value="Ribosomal_uS4_bac-type"/>
</dbReference>
<dbReference type="InterPro" id="IPR018079">
    <property type="entry name" value="Ribosomal_uS4_CS"/>
</dbReference>
<dbReference type="InterPro" id="IPR001912">
    <property type="entry name" value="Ribosomal_uS4_N"/>
</dbReference>
<dbReference type="InterPro" id="IPR002942">
    <property type="entry name" value="S4_RNA-bd"/>
</dbReference>
<dbReference type="InterPro" id="IPR036986">
    <property type="entry name" value="S4_RNA-bd_sf"/>
</dbReference>
<dbReference type="NCBIfam" id="NF003717">
    <property type="entry name" value="PRK05327.1"/>
    <property type="match status" value="1"/>
</dbReference>
<dbReference type="NCBIfam" id="TIGR01017">
    <property type="entry name" value="rpsD_bact"/>
    <property type="match status" value="1"/>
</dbReference>
<dbReference type="PANTHER" id="PTHR11831">
    <property type="entry name" value="30S 40S RIBOSOMAL PROTEIN"/>
    <property type="match status" value="1"/>
</dbReference>
<dbReference type="PANTHER" id="PTHR11831:SF4">
    <property type="entry name" value="SMALL RIBOSOMAL SUBUNIT PROTEIN US4M"/>
    <property type="match status" value="1"/>
</dbReference>
<dbReference type="Pfam" id="PF00163">
    <property type="entry name" value="Ribosomal_S4"/>
    <property type="match status" value="1"/>
</dbReference>
<dbReference type="Pfam" id="PF01479">
    <property type="entry name" value="S4"/>
    <property type="match status" value="1"/>
</dbReference>
<dbReference type="SMART" id="SM01390">
    <property type="entry name" value="Ribosomal_S4"/>
    <property type="match status" value="1"/>
</dbReference>
<dbReference type="SMART" id="SM00363">
    <property type="entry name" value="S4"/>
    <property type="match status" value="1"/>
</dbReference>
<dbReference type="SUPFAM" id="SSF55174">
    <property type="entry name" value="Alpha-L RNA-binding motif"/>
    <property type="match status" value="1"/>
</dbReference>
<dbReference type="PROSITE" id="PS00632">
    <property type="entry name" value="RIBOSOMAL_S4"/>
    <property type="match status" value="1"/>
</dbReference>
<dbReference type="PROSITE" id="PS50889">
    <property type="entry name" value="S4"/>
    <property type="match status" value="1"/>
</dbReference>
<accession>Q81KT2</accession>
<accession>Q6HS87</accession>
<accession>Q6KLI6</accession>
<comment type="function">
    <text evidence="1">One of the primary rRNA binding proteins, it binds directly to 16S rRNA where it nucleates assembly of the body of the 30S subunit.</text>
</comment>
<comment type="function">
    <text evidence="1">With S5 and S12 plays an important role in translational accuracy.</text>
</comment>
<comment type="subunit">
    <text evidence="1">Part of the 30S ribosomal subunit. Contacts protein S5. The interaction surface between S4 and S5 is involved in control of translational fidelity.</text>
</comment>
<comment type="similarity">
    <text evidence="1">Belongs to the universal ribosomal protein uS4 family.</text>
</comment>
<evidence type="ECO:0000255" key="1">
    <source>
        <dbReference type="HAMAP-Rule" id="MF_01306"/>
    </source>
</evidence>
<evidence type="ECO:0000256" key="2">
    <source>
        <dbReference type="SAM" id="MobiDB-lite"/>
    </source>
</evidence>
<evidence type="ECO:0000305" key="3"/>
<gene>
    <name evidence="1" type="primary">rpsD</name>
    <name type="ordered locus">BA_4908</name>
    <name type="ordered locus">GBAA_4908</name>
    <name type="ordered locus">BAS4554</name>
</gene>
<proteinExistence type="inferred from homology"/>
<organism>
    <name type="scientific">Bacillus anthracis</name>
    <dbReference type="NCBI Taxonomy" id="1392"/>
    <lineage>
        <taxon>Bacteria</taxon>
        <taxon>Bacillati</taxon>
        <taxon>Bacillota</taxon>
        <taxon>Bacilli</taxon>
        <taxon>Bacillales</taxon>
        <taxon>Bacillaceae</taxon>
        <taxon>Bacillus</taxon>
        <taxon>Bacillus cereus group</taxon>
    </lineage>
</organism>
<protein>
    <recommendedName>
        <fullName evidence="1">Small ribosomal subunit protein uS4</fullName>
    </recommendedName>
    <alternativeName>
        <fullName evidence="3">30S ribosomal protein S4</fullName>
    </alternativeName>
</protein>
<name>RS4_BACAN</name>
<sequence>MARYTGPAWKLSRRLGISLSGTGKELEKRPYAPGPHGPNQRKKLSEYGLQLQEKQKLRHMYGMTERQFRRTFDQAGKMPGKHGENFMILLEARLDNLVYRMGLARTRRAARQLVNHGHIMVDGARVDIPSYRVKPGQTISVREKSNNLVVVKEAIEVNNFVPEYLTFDADKLEATYTRHAERAELPAEINEALIVEFYSR</sequence>
<keyword id="KW-1185">Reference proteome</keyword>
<keyword id="KW-0687">Ribonucleoprotein</keyword>
<keyword id="KW-0689">Ribosomal protein</keyword>
<keyword id="KW-0694">RNA-binding</keyword>
<keyword id="KW-0699">rRNA-binding</keyword>